<name>SYN2_HUMAN</name>
<evidence type="ECO:0000250" key="1"/>
<evidence type="ECO:0000250" key="2">
    <source>
        <dbReference type="UniProtKB" id="Q63537"/>
    </source>
</evidence>
<evidence type="ECO:0000250" key="3">
    <source>
        <dbReference type="UniProtKB" id="Q64332"/>
    </source>
</evidence>
<evidence type="ECO:0000256" key="4">
    <source>
        <dbReference type="SAM" id="MobiDB-lite"/>
    </source>
</evidence>
<evidence type="ECO:0000269" key="5">
    <source>
    </source>
</evidence>
<evidence type="ECO:0000269" key="6">
    <source>
    </source>
</evidence>
<evidence type="ECO:0000303" key="7">
    <source>
    </source>
</evidence>
<evidence type="ECO:0000303" key="8">
    <source>
    </source>
</evidence>
<evidence type="ECO:0000305" key="9"/>
<protein>
    <recommendedName>
        <fullName>Synapsin-2</fullName>
    </recommendedName>
    <alternativeName>
        <fullName>Synapsin II</fullName>
    </alternativeName>
</protein>
<keyword id="KW-0025">Alternative splicing</keyword>
<keyword id="KW-0597">Phosphoprotein</keyword>
<keyword id="KW-1267">Proteomics identification</keyword>
<keyword id="KW-1185">Reference proteome</keyword>
<keyword id="KW-1211">Schizophrenia</keyword>
<keyword id="KW-0770">Synapse</keyword>
<dbReference type="EMBL" id="U40215">
    <property type="protein sequence ID" value="AAC50718.1"/>
    <property type="molecule type" value="mRNA"/>
</dbReference>
<dbReference type="EMBL" id="AF077671">
    <property type="protein sequence ID" value="AAC28368.1"/>
    <property type="molecule type" value="mRNA"/>
</dbReference>
<dbReference type="EMBL" id="AF077737">
    <property type="protein sequence ID" value="AAC33789.1"/>
    <property type="molecule type" value="mRNA"/>
</dbReference>
<dbReference type="EMBL" id="ABBA01025208">
    <property type="status" value="NOT_ANNOTATED_CDS"/>
    <property type="molecule type" value="Genomic_DNA"/>
</dbReference>
<dbReference type="EMBL" id="AC022234">
    <property type="status" value="NOT_ANNOTATED_CDS"/>
    <property type="molecule type" value="Genomic_DNA"/>
</dbReference>
<dbReference type="EMBL" id="AC026166">
    <property type="status" value="NOT_ANNOTATED_CDS"/>
    <property type="molecule type" value="Genomic_DNA"/>
</dbReference>
<dbReference type="EMBL" id="AC091492">
    <property type="status" value="NOT_ANNOTATED_CDS"/>
    <property type="molecule type" value="Genomic_DNA"/>
</dbReference>
<dbReference type="CCDS" id="CCDS74900.1">
    <molecule id="Q92777-1"/>
</dbReference>
<dbReference type="CCDS" id="CCDS74901.1">
    <molecule id="Q92777-2"/>
</dbReference>
<dbReference type="RefSeq" id="NP_003169.2">
    <molecule id="Q92777-2"/>
    <property type="nucleotide sequence ID" value="NM_003178.5"/>
</dbReference>
<dbReference type="RefSeq" id="NP_598328.1">
    <molecule id="Q92777-1"/>
    <property type="nucleotide sequence ID" value="NM_133625.6"/>
</dbReference>
<dbReference type="SMR" id="Q92777"/>
<dbReference type="BioGRID" id="112720">
    <property type="interactions" value="27"/>
</dbReference>
<dbReference type="FunCoup" id="Q92777">
    <property type="interactions" value="226"/>
</dbReference>
<dbReference type="IntAct" id="Q92777">
    <property type="interactions" value="19"/>
</dbReference>
<dbReference type="MINT" id="Q92777"/>
<dbReference type="STRING" id="9606.ENSP00000480050"/>
<dbReference type="GlyGen" id="Q92777">
    <property type="glycosylation" value="4 sites, 1 O-linked glycan (3 sites)"/>
</dbReference>
<dbReference type="iPTMnet" id="Q92777"/>
<dbReference type="PhosphoSitePlus" id="Q92777"/>
<dbReference type="SwissPalm" id="Q92777"/>
<dbReference type="BioMuta" id="SYN2"/>
<dbReference type="DMDM" id="223634710"/>
<dbReference type="jPOST" id="Q92777"/>
<dbReference type="MassIVE" id="Q92777"/>
<dbReference type="PaxDb" id="9606-ENSP00000480050"/>
<dbReference type="PeptideAtlas" id="Q92777"/>
<dbReference type="ProteomicsDB" id="75457">
    <molecule id="Q92777-1"/>
</dbReference>
<dbReference type="ProteomicsDB" id="75458">
    <molecule id="Q92777-2"/>
</dbReference>
<dbReference type="ABCD" id="Q92777">
    <property type="antibodies" value="1 sequenced antibody"/>
</dbReference>
<dbReference type="Antibodypedia" id="4054">
    <property type="antibodies" value="140 antibodies from 29 providers"/>
</dbReference>
<dbReference type="DNASU" id="6854"/>
<dbReference type="Ensembl" id="ENST00000620175.4">
    <molecule id="Q92777-2"/>
    <property type="protein sequence ID" value="ENSP00000484916.1"/>
    <property type="gene ID" value="ENSG00000157152.17"/>
</dbReference>
<dbReference type="Ensembl" id="ENST00000621198.5">
    <molecule id="Q92777-1"/>
    <property type="protein sequence ID" value="ENSP00000480050.1"/>
    <property type="gene ID" value="ENSG00000157152.17"/>
</dbReference>
<dbReference type="GeneID" id="6854"/>
<dbReference type="KEGG" id="hsa:6854"/>
<dbReference type="MANE-Select" id="ENST00000621198.5">
    <property type="protein sequence ID" value="ENSP00000480050.1"/>
    <property type="RefSeq nucleotide sequence ID" value="NM_133625.6"/>
    <property type="RefSeq protein sequence ID" value="NP_598328.1"/>
</dbReference>
<dbReference type="AGR" id="HGNC:11495"/>
<dbReference type="CTD" id="6854"/>
<dbReference type="DisGeNET" id="6854"/>
<dbReference type="GeneCards" id="SYN2"/>
<dbReference type="HGNC" id="HGNC:11495">
    <property type="gene designation" value="SYN2"/>
</dbReference>
<dbReference type="HPA" id="ENSG00000157152">
    <property type="expression patterns" value="Tissue enriched (brain)"/>
</dbReference>
<dbReference type="MalaCards" id="SYN2"/>
<dbReference type="MIM" id="181500">
    <property type="type" value="phenotype"/>
</dbReference>
<dbReference type="MIM" id="600755">
    <property type="type" value="gene"/>
</dbReference>
<dbReference type="neXtProt" id="NX_Q92777"/>
<dbReference type="OpenTargets" id="ENSG00000157152"/>
<dbReference type="VEuPathDB" id="HostDB:ENSG00000157152"/>
<dbReference type="eggNOG" id="KOG3895">
    <property type="taxonomic scope" value="Eukaryota"/>
</dbReference>
<dbReference type="GeneTree" id="ENSGT00940000156062"/>
<dbReference type="InParanoid" id="Q92777"/>
<dbReference type="OMA" id="CCEIFGG"/>
<dbReference type="OrthoDB" id="10249572at2759"/>
<dbReference type="PAN-GO" id="Q92777">
    <property type="GO annotations" value="2 GO annotations based on evolutionary models"/>
</dbReference>
<dbReference type="PhylomeDB" id="Q92777"/>
<dbReference type="PathwayCommons" id="Q92777"/>
<dbReference type="Reactome" id="R-HSA-181429">
    <property type="pathway name" value="Serotonin Neurotransmitter Release Cycle"/>
</dbReference>
<dbReference type="Reactome" id="R-HSA-212676">
    <property type="pathway name" value="Dopamine Neurotransmitter Release Cycle"/>
</dbReference>
<dbReference type="SignaLink" id="Q92777"/>
<dbReference type="SIGNOR" id="Q92777"/>
<dbReference type="BioGRID-ORCS" id="6854">
    <property type="hits" value="11 hits in 284 CRISPR screens"/>
</dbReference>
<dbReference type="CD-CODE" id="4543C70E">
    <property type="entry name" value="Synthetic Condensate 000118"/>
</dbReference>
<dbReference type="CD-CODE" id="84137BFC">
    <property type="entry name" value="Synthetic Condensate 000112"/>
</dbReference>
<dbReference type="CD-CODE" id="FB4E32DD">
    <property type="entry name" value="Presynaptic clusters and postsynaptic densities"/>
</dbReference>
<dbReference type="ChiTaRS" id="SYN2">
    <property type="organism name" value="human"/>
</dbReference>
<dbReference type="GenomeRNAi" id="6854"/>
<dbReference type="Pharos" id="Q92777">
    <property type="development level" value="Tbio"/>
</dbReference>
<dbReference type="PRO" id="PR:Q92777"/>
<dbReference type="Proteomes" id="UP000005640">
    <property type="component" value="Chromosome 3"/>
</dbReference>
<dbReference type="RNAct" id="Q92777">
    <property type="molecule type" value="protein"/>
</dbReference>
<dbReference type="Bgee" id="ENSG00000157152">
    <property type="expression patterns" value="Expressed in middle temporal gyrus and 143 other cell types or tissues"/>
</dbReference>
<dbReference type="ExpressionAtlas" id="Q92777">
    <property type="expression patterns" value="baseline and differential"/>
</dbReference>
<dbReference type="GO" id="GO:0098978">
    <property type="term" value="C:glutamatergic synapse"/>
    <property type="evidence" value="ECO:0007669"/>
    <property type="project" value="Ensembl"/>
</dbReference>
<dbReference type="GO" id="GO:0005886">
    <property type="term" value="C:plasma membrane"/>
    <property type="evidence" value="ECO:0007669"/>
    <property type="project" value="Ensembl"/>
</dbReference>
<dbReference type="GO" id="GO:0014069">
    <property type="term" value="C:postsynaptic density"/>
    <property type="evidence" value="ECO:0007669"/>
    <property type="project" value="Ensembl"/>
</dbReference>
<dbReference type="GO" id="GO:0098685">
    <property type="term" value="C:Schaffer collateral - CA1 synapse"/>
    <property type="evidence" value="ECO:0007669"/>
    <property type="project" value="Ensembl"/>
</dbReference>
<dbReference type="GO" id="GO:0031201">
    <property type="term" value="C:SNARE complex"/>
    <property type="evidence" value="ECO:0007669"/>
    <property type="project" value="Ensembl"/>
</dbReference>
<dbReference type="GO" id="GO:0045202">
    <property type="term" value="C:synapse"/>
    <property type="evidence" value="ECO:0000250"/>
    <property type="project" value="ParkinsonsUK-UCL"/>
</dbReference>
<dbReference type="GO" id="GO:0030672">
    <property type="term" value="C:synaptic vesicle membrane"/>
    <property type="evidence" value="ECO:0000250"/>
    <property type="project" value="ParkinsonsUK-UCL"/>
</dbReference>
<dbReference type="GO" id="GO:0005524">
    <property type="term" value="F:ATP binding"/>
    <property type="evidence" value="ECO:0000304"/>
    <property type="project" value="ParkinsonsUK-UCL"/>
</dbReference>
<dbReference type="GO" id="GO:0042802">
    <property type="term" value="F:identical protein binding"/>
    <property type="evidence" value="ECO:0007669"/>
    <property type="project" value="Ensembl"/>
</dbReference>
<dbReference type="GO" id="GO:0017156">
    <property type="term" value="P:calcium-ion regulated exocytosis"/>
    <property type="evidence" value="ECO:0007669"/>
    <property type="project" value="Ensembl"/>
</dbReference>
<dbReference type="GO" id="GO:0007268">
    <property type="term" value="P:chemical synaptic transmission"/>
    <property type="evidence" value="ECO:0000304"/>
    <property type="project" value="ProtInc"/>
</dbReference>
<dbReference type="GO" id="GO:0007269">
    <property type="term" value="P:neurotransmitter secretion"/>
    <property type="evidence" value="ECO:0000250"/>
    <property type="project" value="ParkinsonsUK-UCL"/>
</dbReference>
<dbReference type="GO" id="GO:0050808">
    <property type="term" value="P:synapse organization"/>
    <property type="evidence" value="ECO:0000318"/>
    <property type="project" value="GO_Central"/>
</dbReference>
<dbReference type="GO" id="GO:0097091">
    <property type="term" value="P:synaptic vesicle clustering"/>
    <property type="evidence" value="ECO:0000318"/>
    <property type="project" value="GO_Central"/>
</dbReference>
<dbReference type="FunFam" id="3.30.1490.20:FF:000008">
    <property type="entry name" value="Synapsin I"/>
    <property type="match status" value="1"/>
</dbReference>
<dbReference type="FunFam" id="3.40.50.20:FF:000008">
    <property type="entry name" value="Synapsin III"/>
    <property type="match status" value="1"/>
</dbReference>
<dbReference type="FunFam" id="3.30.470.20:FF:000151">
    <property type="entry name" value="Synapsin-2"/>
    <property type="match status" value="1"/>
</dbReference>
<dbReference type="Gene3D" id="3.40.50.20">
    <property type="match status" value="1"/>
</dbReference>
<dbReference type="Gene3D" id="3.30.1490.20">
    <property type="entry name" value="ATP-grasp fold, A domain"/>
    <property type="match status" value="1"/>
</dbReference>
<dbReference type="Gene3D" id="3.30.470.20">
    <property type="entry name" value="ATP-grasp fold, B domain"/>
    <property type="match status" value="1"/>
</dbReference>
<dbReference type="InterPro" id="IPR013815">
    <property type="entry name" value="ATP_grasp_subdomain_1"/>
</dbReference>
<dbReference type="InterPro" id="IPR016185">
    <property type="entry name" value="PreATP-grasp_dom_sf"/>
</dbReference>
<dbReference type="InterPro" id="IPR001359">
    <property type="entry name" value="Synapsin"/>
</dbReference>
<dbReference type="InterPro" id="IPR020898">
    <property type="entry name" value="Synapsin_ATP-bd_dom"/>
</dbReference>
<dbReference type="InterPro" id="IPR019735">
    <property type="entry name" value="Synapsin_CS"/>
</dbReference>
<dbReference type="InterPro" id="IPR019736">
    <property type="entry name" value="Synapsin_P_site"/>
</dbReference>
<dbReference type="InterPro" id="IPR020897">
    <property type="entry name" value="Synapsin_pre-ATP-grasp_dom"/>
</dbReference>
<dbReference type="PANTHER" id="PTHR10841">
    <property type="entry name" value="SYNAPSIN"/>
    <property type="match status" value="1"/>
</dbReference>
<dbReference type="PANTHER" id="PTHR10841:SF20">
    <property type="entry name" value="SYNAPSIN-2"/>
    <property type="match status" value="1"/>
</dbReference>
<dbReference type="Pfam" id="PF02078">
    <property type="entry name" value="Synapsin"/>
    <property type="match status" value="1"/>
</dbReference>
<dbReference type="Pfam" id="PF02750">
    <property type="entry name" value="Synapsin_C"/>
    <property type="match status" value="1"/>
</dbReference>
<dbReference type="Pfam" id="PF10581">
    <property type="entry name" value="Synapsin_N"/>
    <property type="match status" value="1"/>
</dbReference>
<dbReference type="PRINTS" id="PR01368">
    <property type="entry name" value="SYNAPSIN"/>
</dbReference>
<dbReference type="SUPFAM" id="SSF56059">
    <property type="entry name" value="Glutathione synthetase ATP-binding domain-like"/>
    <property type="match status" value="1"/>
</dbReference>
<dbReference type="SUPFAM" id="SSF52440">
    <property type="entry name" value="PreATP-grasp domain"/>
    <property type="match status" value="1"/>
</dbReference>
<dbReference type="PROSITE" id="PS00415">
    <property type="entry name" value="SYNAPSIN_1"/>
    <property type="match status" value="1"/>
</dbReference>
<dbReference type="PROSITE" id="PS00416">
    <property type="entry name" value="SYNAPSIN_2"/>
    <property type="match status" value="1"/>
</dbReference>
<sequence length="582" mass="62996">MMNFLRRRLSDSSFIANLPNGYMTDLQRPEPQQPPPPPPPGPGAASASAAPPTASPGPERRPPPASAPAPQPAPTPSVGSSFFSSLSQAVKQTAASAGLVDAPAPAPAAARKAKVLLVVDEPHADWAKCFRGKKVLGDYDIKVEQAEFSELNLVAHADGTYAVDMQVLRNGTKVVRSFRPDFVLIRQHAFGMAENEDFRHLIIGMQYAGLPSINSLESIYNFCDKPWVFAQLVAIYKTLGGEKFPLIEQTYYPNHKEMLTLPTFPVVVKIGHAHSGMGKVKVENHYDFQDIASVVALTQTYATAEPFIDSKYDIRVQKIGNNYKAYMRTSISGNWKTNTGSAMLEQIAMSDRYKLWVDTCSEMFGGLDICAVKAVHGKDGKDYIFEVMDCSMPLIGEHQVEDRQLITELVISKMNQLLSRTPALSPQRPLTTQQPQSGTLKDPDSSKTPPQRPPPQGGPGQPQGMQPPGKVLPPRRLPPGPSLPPSSSSSSSSSSSAPQRPGGPTTHGDAPSSSSSLAEAQPPLAAPPQKPQPHPQLNKSQSLTNAFSFSESSFFRSSANEDEAKAETIRSLRKSFASLFSD</sequence>
<accession>Q92777</accession>
<accession>A0A087WW96</accession>
<accession>A0A087X2E3</accession>
<accession>A8MY98</accession>
<reference key="1">
    <citation type="journal article" date="1996" name="Gene">
        <title>Cloning and sequencing analysis of a human synapsin IIb-encoding brain cDNA.</title>
        <authorList>
            <person name="Xie Y."/>
        </authorList>
    </citation>
    <scope>NUCLEOTIDE SEQUENCE [MRNA] (ISOFORM IIB)</scope>
    <source>
        <tissue>Brain</tissue>
    </source>
</reference>
<reference key="2">
    <citation type="journal article" date="1999" name="DNA Seq.">
        <title>Cloning of cDNAs encoding human synapsins IIa and IIb.</title>
        <authorList>
            <person name="Porton B."/>
            <person name="Kao H.-T."/>
            <person name="Greengard P."/>
        </authorList>
    </citation>
    <scope>NUCLEOTIDE SEQUENCE [MRNA] (ISOFORMS IIA AND IIB)</scope>
    <source>
        <tissue>Brain</tissue>
    </source>
</reference>
<reference key="3">
    <citation type="journal article" date="2006" name="Nature">
        <title>The DNA sequence, annotation and analysis of human chromosome 3.</title>
        <authorList>
            <person name="Muzny D.M."/>
            <person name="Scherer S.E."/>
            <person name="Kaul R."/>
            <person name="Wang J."/>
            <person name="Yu J."/>
            <person name="Sudbrak R."/>
            <person name="Buhay C.J."/>
            <person name="Chen R."/>
            <person name="Cree A."/>
            <person name="Ding Y."/>
            <person name="Dugan-Rocha S."/>
            <person name="Gill R."/>
            <person name="Gunaratne P."/>
            <person name="Harris R.A."/>
            <person name="Hawes A.C."/>
            <person name="Hernandez J."/>
            <person name="Hodgson A.V."/>
            <person name="Hume J."/>
            <person name="Jackson A."/>
            <person name="Khan Z.M."/>
            <person name="Kovar-Smith C."/>
            <person name="Lewis L.R."/>
            <person name="Lozado R.J."/>
            <person name="Metzker M.L."/>
            <person name="Milosavljevic A."/>
            <person name="Miner G.R."/>
            <person name="Morgan M.B."/>
            <person name="Nazareth L.V."/>
            <person name="Scott G."/>
            <person name="Sodergren E."/>
            <person name="Song X.-Z."/>
            <person name="Steffen D."/>
            <person name="Wei S."/>
            <person name="Wheeler D.A."/>
            <person name="Wright M.W."/>
            <person name="Worley K.C."/>
            <person name="Yuan Y."/>
            <person name="Zhang Z."/>
            <person name="Adams C.Q."/>
            <person name="Ansari-Lari M.A."/>
            <person name="Ayele M."/>
            <person name="Brown M.J."/>
            <person name="Chen G."/>
            <person name="Chen Z."/>
            <person name="Clendenning J."/>
            <person name="Clerc-Blankenburg K.P."/>
            <person name="Chen R."/>
            <person name="Chen Z."/>
            <person name="Davis C."/>
            <person name="Delgado O."/>
            <person name="Dinh H.H."/>
            <person name="Dong W."/>
            <person name="Draper H."/>
            <person name="Ernst S."/>
            <person name="Fu G."/>
            <person name="Gonzalez-Garay M.L."/>
            <person name="Garcia D.K."/>
            <person name="Gillett W."/>
            <person name="Gu J."/>
            <person name="Hao B."/>
            <person name="Haugen E."/>
            <person name="Havlak P."/>
            <person name="He X."/>
            <person name="Hennig S."/>
            <person name="Hu S."/>
            <person name="Huang W."/>
            <person name="Jackson L.R."/>
            <person name="Jacob L.S."/>
            <person name="Kelly S.H."/>
            <person name="Kube M."/>
            <person name="Levy R."/>
            <person name="Li Z."/>
            <person name="Liu B."/>
            <person name="Liu J."/>
            <person name="Liu W."/>
            <person name="Lu J."/>
            <person name="Maheshwari M."/>
            <person name="Nguyen B.-V."/>
            <person name="Okwuonu G.O."/>
            <person name="Palmeiri A."/>
            <person name="Pasternak S."/>
            <person name="Perez L.M."/>
            <person name="Phelps K.A."/>
            <person name="Plopper F.J."/>
            <person name="Qiang B."/>
            <person name="Raymond C."/>
            <person name="Rodriguez R."/>
            <person name="Saenphimmachak C."/>
            <person name="Santibanez J."/>
            <person name="Shen H."/>
            <person name="Shen Y."/>
            <person name="Subramanian S."/>
            <person name="Tabor P.E."/>
            <person name="Verduzco D."/>
            <person name="Waldron L."/>
            <person name="Wang J."/>
            <person name="Wang J."/>
            <person name="Wang Q."/>
            <person name="Williams G.A."/>
            <person name="Wong G.K.-S."/>
            <person name="Yao Z."/>
            <person name="Zhang J."/>
            <person name="Zhang X."/>
            <person name="Zhao G."/>
            <person name="Zhou J."/>
            <person name="Zhou Y."/>
            <person name="Nelson D."/>
            <person name="Lehrach H."/>
            <person name="Reinhardt R."/>
            <person name="Naylor S.L."/>
            <person name="Yang H."/>
            <person name="Olson M."/>
            <person name="Weinstock G."/>
            <person name="Gibbs R.A."/>
        </authorList>
    </citation>
    <scope>NUCLEOTIDE SEQUENCE [LARGE SCALE GENOMIC DNA]</scope>
</reference>
<reference key="4">
    <citation type="journal article" date="2004" name="Am. J. Hum. Genet.">
        <title>Family-based association study of synapsin II and schizophrenia.</title>
        <authorList>
            <person name="Chen Q."/>
            <person name="He G."/>
            <person name="Qin W."/>
            <person name="Chen Q.Y."/>
            <person name="Zhao X.Z."/>
            <person name="Duan S.W."/>
            <person name="Liu X.M."/>
            <person name="Feng G.Y."/>
            <person name="Xu Y.F."/>
            <person name="St Clair D."/>
            <person name="Li M."/>
            <person name="Wang J.H."/>
            <person name="Xing Y.L."/>
            <person name="Shi J.G."/>
            <person name="He L."/>
        </authorList>
    </citation>
    <scope>INVOLVEMENT IN SCZD</scope>
</reference>
<reference key="5">
    <citation type="journal article" date="2013" name="Hum. Mol. Genet.">
        <title>Epileptogenic Q555X SYN1 mutant triggers imbalances in release dynamics and short-term plasticity.</title>
        <authorList>
            <person name="Lignani G."/>
            <person name="Raimondi A."/>
            <person name="Ferrea E."/>
            <person name="Rocchi A."/>
            <person name="Paonessa F."/>
            <person name="Cesca F."/>
            <person name="Orlando M."/>
            <person name="Tkatch T."/>
            <person name="Valtorta F."/>
            <person name="Cossette P."/>
            <person name="Baldelli P."/>
            <person name="Benfenati F."/>
        </authorList>
    </citation>
    <scope>INTERACTION WITH SYN1</scope>
</reference>
<feature type="chain" id="PRO_0000183021" description="Synapsin-2">
    <location>
        <begin position="1"/>
        <end position="582"/>
    </location>
</feature>
<feature type="region of interest" description="A">
    <location>
        <begin position="1"/>
        <end position="29"/>
    </location>
</feature>
<feature type="region of interest" description="Disordered" evidence="4">
    <location>
        <begin position="16"/>
        <end position="84"/>
    </location>
</feature>
<feature type="region of interest" description="B; linker">
    <location>
        <begin position="33"/>
        <end position="112"/>
    </location>
</feature>
<feature type="region of interest" description="C; actin-binding and synaptic-vesicle binding">
    <location>
        <begin position="113"/>
        <end position="420"/>
    </location>
</feature>
<feature type="region of interest" description="Disordered" evidence="4">
    <location>
        <begin position="420"/>
        <end position="545"/>
    </location>
</feature>
<feature type="region of interest" description="G; Pro-rich linker">
    <location>
        <begin position="421"/>
        <end position="457"/>
    </location>
</feature>
<feature type="region of interest" description="H; Pro/Ser-rich linker">
    <location>
        <begin position="458"/>
        <end position="533"/>
    </location>
</feature>
<feature type="region of interest" description="E">
    <location>
        <begin position="534"/>
        <end position="582"/>
    </location>
</feature>
<feature type="compositionally biased region" description="Pro residues" evidence="4">
    <location>
        <begin position="31"/>
        <end position="42"/>
    </location>
</feature>
<feature type="compositionally biased region" description="Low complexity" evidence="4">
    <location>
        <begin position="43"/>
        <end position="52"/>
    </location>
</feature>
<feature type="compositionally biased region" description="Pro residues" evidence="4">
    <location>
        <begin position="63"/>
        <end position="75"/>
    </location>
</feature>
<feature type="compositionally biased region" description="Polar residues" evidence="4">
    <location>
        <begin position="420"/>
        <end position="439"/>
    </location>
</feature>
<feature type="compositionally biased region" description="Low complexity" evidence="4">
    <location>
        <begin position="462"/>
        <end position="474"/>
    </location>
</feature>
<feature type="compositionally biased region" description="Pro residues" evidence="4">
    <location>
        <begin position="475"/>
        <end position="484"/>
    </location>
</feature>
<feature type="compositionally biased region" description="Low complexity" evidence="4">
    <location>
        <begin position="485"/>
        <end position="523"/>
    </location>
</feature>
<feature type="compositionally biased region" description="Pro residues" evidence="4">
    <location>
        <begin position="524"/>
        <end position="534"/>
    </location>
</feature>
<feature type="modified residue" description="Phosphoserine; by PKA and CaMK1" evidence="2">
    <location>
        <position position="10"/>
    </location>
</feature>
<feature type="modified residue" description="Phosphothreonine" evidence="3">
    <location>
        <position position="421"/>
    </location>
</feature>
<feature type="modified residue" description="Phosphoserine" evidence="3">
    <location>
        <position position="425"/>
    </location>
</feature>
<feature type="splice variant" id="VSP_006320" description="In isoform IIb." evidence="7 8">
    <original>GPGQPQGMQPPGKVLPPRRLP</original>
    <variation>CLQYILDCNGIAVGPKQVQAS</variation>
    <location>
        <begin position="458"/>
        <end position="478"/>
    </location>
</feature>
<feature type="splice variant" id="VSP_006321" description="In isoform IIb." evidence="7 8">
    <location>
        <begin position="479"/>
        <end position="582"/>
    </location>
</feature>
<feature type="sequence variant" id="VAR_059825" description="In dbSNP:rs794999.">
    <original>T</original>
    <variation>A</variation>
    <location>
        <position position="506"/>
    </location>
</feature>
<feature type="sequence conflict" description="In Ref. 2; AAC28368/AAC33789." evidence="9" ref="2">
    <original>R</original>
    <variation>K</variation>
    <location>
        <position position="61"/>
    </location>
</feature>
<feature type="sequence conflict" description="In Ref. 1; AAC50718." evidence="9" ref="1">
    <original>P</original>
    <variation>A</variation>
    <location>
        <position position="70"/>
    </location>
</feature>
<proteinExistence type="evidence at protein level"/>
<comment type="function">
    <text evidence="1">Neuronal phosphoprotein that coats synaptic vesicles, binds to the cytoskeleton, and is believed to function in the regulation of neurotransmitter release. May play a role in noradrenaline secretion by sympathetic neurons (By similarity).</text>
</comment>
<comment type="subunit">
    <text evidence="2 6">Can form oligomers with SYN1 (PubMed:23406870). Interacts with CAPON.</text>
</comment>
<comment type="subcellular location">
    <subcellularLocation>
        <location>Synapse</location>
    </subcellularLocation>
</comment>
<comment type="alternative products">
    <event type="alternative splicing"/>
    <isoform>
        <id>Q92777-1</id>
        <name>IIa</name>
        <sequence type="displayed"/>
    </isoform>
    <isoform>
        <id>Q92777-2</id>
        <name>IIb</name>
        <sequence type="described" ref="VSP_006320 VSP_006321"/>
    </isoform>
</comment>
<comment type="tissue specificity">
    <text>Central and peripheral nervous systems.</text>
</comment>
<comment type="domain">
    <text evidence="1">The A region binds phospholipids with a preference for negatively charged species.</text>
</comment>
<comment type="PTM">
    <text evidence="1">Phosphorylation at Ser-10 dissociates synapsins from synaptic vesicles. Phosphorylation at Ser-425 by MAPK1/ERK2 and/or MAPK3/ERK1 may play a role in noradrenaline secretion by sympathetic neurons (By similarity).</text>
</comment>
<comment type="disease" evidence="5">
    <disease id="DI-03626">
        <name>Schizophrenia</name>
        <acronym>SCZD</acronym>
        <description>A complex, multifactorial psychotic disorder or group of disorders characterized by disturbances in the form and content of thought (e.g. delusions, hallucinations), in mood (e.g. inappropriate affect), in sense of self and relationship to the external world (e.g. loss of ego boundaries, withdrawal), and in behavior (e.g bizarre or apparently purposeless behavior). Although it affects emotions, it is distinguished from mood disorders in which such disturbances are primary. Similarly, there may be mild impairment of cognitive function, and it is distinguished from the dementias in which disturbed cognitive function is considered primary. Some patients manifest schizophrenic as well as bipolar disorder symptoms and are often given the diagnosis of schizoaffective disorder.</description>
        <dbReference type="MIM" id="181500"/>
    </disease>
    <text>Disease susceptibility may be associated with variants affecting the gene represented in this entry.</text>
</comment>
<comment type="similarity">
    <text evidence="9">Belongs to the synapsin family.</text>
</comment>
<comment type="caution">
    <text evidence="9">There are several mRNAs and ESTs supporting this gene model. However, the genome sequence encoding the N-terminal part contains several sequence discrepancies.</text>
</comment>
<comment type="sequence caution" evidence="9">
    <conflict type="frameshift">
        <sequence resource="EMBL" id="AC022234"/>
    </conflict>
</comment>
<comment type="sequence caution" evidence="9">
    <conflict type="miscellaneous discrepancy">
        <sequence resource="EMBL" id="AC022234"/>
    </conflict>
    <text>Several in-frame stop codons.</text>
</comment>
<organism>
    <name type="scientific">Homo sapiens</name>
    <name type="common">Human</name>
    <dbReference type="NCBI Taxonomy" id="9606"/>
    <lineage>
        <taxon>Eukaryota</taxon>
        <taxon>Metazoa</taxon>
        <taxon>Chordata</taxon>
        <taxon>Craniata</taxon>
        <taxon>Vertebrata</taxon>
        <taxon>Euteleostomi</taxon>
        <taxon>Mammalia</taxon>
        <taxon>Eutheria</taxon>
        <taxon>Euarchontoglires</taxon>
        <taxon>Primates</taxon>
        <taxon>Haplorrhini</taxon>
        <taxon>Catarrhini</taxon>
        <taxon>Hominidae</taxon>
        <taxon>Homo</taxon>
    </lineage>
</organism>
<gene>
    <name type="primary">SYN2</name>
</gene>